<keyword id="KW-0067">ATP-binding</keyword>
<keyword id="KW-0418">Kinase</keyword>
<keyword id="KW-0545">Nucleotide biosynthesis</keyword>
<keyword id="KW-0547">Nucleotide-binding</keyword>
<keyword id="KW-1185">Reference proteome</keyword>
<keyword id="KW-0808">Transferase</keyword>
<dbReference type="EC" id="2.7.4.9" evidence="1"/>
<dbReference type="EMBL" id="AM260479">
    <property type="protein sequence ID" value="CAJ92701.1"/>
    <property type="molecule type" value="Genomic_DNA"/>
</dbReference>
<dbReference type="RefSeq" id="WP_010810003.1">
    <property type="nucleotide sequence ID" value="NZ_CP039287.1"/>
</dbReference>
<dbReference type="SMR" id="Q0KBC0"/>
<dbReference type="STRING" id="381666.H16_A1569"/>
<dbReference type="KEGG" id="reh:H16_A1569"/>
<dbReference type="eggNOG" id="COG0125">
    <property type="taxonomic scope" value="Bacteria"/>
</dbReference>
<dbReference type="HOGENOM" id="CLU_049131_0_2_4"/>
<dbReference type="OrthoDB" id="9774907at2"/>
<dbReference type="Proteomes" id="UP000008210">
    <property type="component" value="Chromosome 1"/>
</dbReference>
<dbReference type="GO" id="GO:0005829">
    <property type="term" value="C:cytosol"/>
    <property type="evidence" value="ECO:0007669"/>
    <property type="project" value="TreeGrafter"/>
</dbReference>
<dbReference type="GO" id="GO:0005524">
    <property type="term" value="F:ATP binding"/>
    <property type="evidence" value="ECO:0007669"/>
    <property type="project" value="UniProtKB-UniRule"/>
</dbReference>
<dbReference type="GO" id="GO:0004798">
    <property type="term" value="F:dTMP kinase activity"/>
    <property type="evidence" value="ECO:0007669"/>
    <property type="project" value="UniProtKB-UniRule"/>
</dbReference>
<dbReference type="GO" id="GO:0006233">
    <property type="term" value="P:dTDP biosynthetic process"/>
    <property type="evidence" value="ECO:0007669"/>
    <property type="project" value="InterPro"/>
</dbReference>
<dbReference type="GO" id="GO:0006235">
    <property type="term" value="P:dTTP biosynthetic process"/>
    <property type="evidence" value="ECO:0007669"/>
    <property type="project" value="UniProtKB-UniRule"/>
</dbReference>
<dbReference type="GO" id="GO:0006227">
    <property type="term" value="P:dUDP biosynthetic process"/>
    <property type="evidence" value="ECO:0007669"/>
    <property type="project" value="TreeGrafter"/>
</dbReference>
<dbReference type="CDD" id="cd01672">
    <property type="entry name" value="TMPK"/>
    <property type="match status" value="1"/>
</dbReference>
<dbReference type="FunFam" id="3.40.50.300:FF:000225">
    <property type="entry name" value="Thymidylate kinase"/>
    <property type="match status" value="1"/>
</dbReference>
<dbReference type="Gene3D" id="3.40.50.300">
    <property type="entry name" value="P-loop containing nucleotide triphosphate hydrolases"/>
    <property type="match status" value="1"/>
</dbReference>
<dbReference type="HAMAP" id="MF_00165">
    <property type="entry name" value="Thymidylate_kinase"/>
    <property type="match status" value="1"/>
</dbReference>
<dbReference type="InterPro" id="IPR027417">
    <property type="entry name" value="P-loop_NTPase"/>
</dbReference>
<dbReference type="InterPro" id="IPR039430">
    <property type="entry name" value="Thymidylate_kin-like_dom"/>
</dbReference>
<dbReference type="InterPro" id="IPR018094">
    <property type="entry name" value="Thymidylate_kinase"/>
</dbReference>
<dbReference type="NCBIfam" id="TIGR00041">
    <property type="entry name" value="DTMP_kinase"/>
    <property type="match status" value="1"/>
</dbReference>
<dbReference type="PANTHER" id="PTHR10344">
    <property type="entry name" value="THYMIDYLATE KINASE"/>
    <property type="match status" value="1"/>
</dbReference>
<dbReference type="PANTHER" id="PTHR10344:SF4">
    <property type="entry name" value="UMP-CMP KINASE 2, MITOCHONDRIAL"/>
    <property type="match status" value="1"/>
</dbReference>
<dbReference type="Pfam" id="PF02223">
    <property type="entry name" value="Thymidylate_kin"/>
    <property type="match status" value="1"/>
</dbReference>
<dbReference type="SUPFAM" id="SSF52540">
    <property type="entry name" value="P-loop containing nucleoside triphosphate hydrolases"/>
    <property type="match status" value="1"/>
</dbReference>
<organism>
    <name type="scientific">Cupriavidus necator (strain ATCC 17699 / DSM 428 / KCTC 22496 / NCIMB 10442 / H16 / Stanier 337)</name>
    <name type="common">Ralstonia eutropha</name>
    <dbReference type="NCBI Taxonomy" id="381666"/>
    <lineage>
        <taxon>Bacteria</taxon>
        <taxon>Pseudomonadati</taxon>
        <taxon>Pseudomonadota</taxon>
        <taxon>Betaproteobacteria</taxon>
        <taxon>Burkholderiales</taxon>
        <taxon>Burkholderiaceae</taxon>
        <taxon>Cupriavidus</taxon>
    </lineage>
</organism>
<reference key="1">
    <citation type="journal article" date="2006" name="Nat. Biotechnol.">
        <title>Genome sequence of the bioplastic-producing 'Knallgas' bacterium Ralstonia eutropha H16.</title>
        <authorList>
            <person name="Pohlmann A."/>
            <person name="Fricke W.F."/>
            <person name="Reinecke F."/>
            <person name="Kusian B."/>
            <person name="Liesegang H."/>
            <person name="Cramm R."/>
            <person name="Eitinger T."/>
            <person name="Ewering C."/>
            <person name="Poetter M."/>
            <person name="Schwartz E."/>
            <person name="Strittmatter A."/>
            <person name="Voss I."/>
            <person name="Gottschalk G."/>
            <person name="Steinbuechel A."/>
            <person name="Friedrich B."/>
            <person name="Bowien B."/>
        </authorList>
    </citation>
    <scope>NUCLEOTIDE SEQUENCE [LARGE SCALE GENOMIC DNA]</scope>
    <source>
        <strain>ATCC 17699 / DSM 428 / KCTC 22496 / NCIMB 10442 / H16 / Stanier 337</strain>
    </source>
</reference>
<name>KTHY_CUPNH</name>
<feature type="chain" id="PRO_1000123583" description="Thymidylate kinase">
    <location>
        <begin position="1"/>
        <end position="203"/>
    </location>
</feature>
<feature type="binding site" evidence="1">
    <location>
        <begin position="10"/>
        <end position="17"/>
    </location>
    <ligand>
        <name>ATP</name>
        <dbReference type="ChEBI" id="CHEBI:30616"/>
    </ligand>
</feature>
<comment type="function">
    <text evidence="1">Phosphorylation of dTMP to form dTDP in both de novo and salvage pathways of dTTP synthesis.</text>
</comment>
<comment type="catalytic activity">
    <reaction evidence="1">
        <text>dTMP + ATP = dTDP + ADP</text>
        <dbReference type="Rhea" id="RHEA:13517"/>
        <dbReference type="ChEBI" id="CHEBI:30616"/>
        <dbReference type="ChEBI" id="CHEBI:58369"/>
        <dbReference type="ChEBI" id="CHEBI:63528"/>
        <dbReference type="ChEBI" id="CHEBI:456216"/>
        <dbReference type="EC" id="2.7.4.9"/>
    </reaction>
</comment>
<comment type="similarity">
    <text evidence="1">Belongs to the thymidylate kinase family.</text>
</comment>
<sequence length="203" mass="22879">MRGKFITFEGIDGAGKSTHIDWVADRLRARSDIAGVVTTREPGGTSLGEDLRQILLHRKMHLETEALLMFAARREHIAEVIAPALERGKWVISDRFTDATFAYQGGGRGLATERLEVLEDWVQGGLQPDLTLLFDVPLETASERLAGARAPDRFESESRAFFQRTRDEYLRRAAQSPQRFRVIDATRSIADIRDELEKIIATI</sequence>
<protein>
    <recommendedName>
        <fullName evidence="1">Thymidylate kinase</fullName>
        <ecNumber evidence="1">2.7.4.9</ecNumber>
    </recommendedName>
    <alternativeName>
        <fullName evidence="1">dTMP kinase</fullName>
    </alternativeName>
</protein>
<evidence type="ECO:0000255" key="1">
    <source>
        <dbReference type="HAMAP-Rule" id="MF_00165"/>
    </source>
</evidence>
<gene>
    <name evidence="1" type="primary">tmk</name>
    <name type="ordered locus">H16_A1569</name>
</gene>
<proteinExistence type="inferred from homology"/>
<accession>Q0KBC0</accession>